<sequence length="333" mass="37930">MVINDIESLTAQALAEVAAAQNLDHLEFLRVALLGKNGSITLQLKQLGKLPVEQRKAIGEKLNRVRDLISDALMDRKAALESAALSKRLIDERVDVTLPGRRGERAGLHPVTRTLERITEIFARLGYELVEGPEIEDDWHNFEALNFPLHHPARAMHDTFYFGDGRLLRTHTSGVQVRYMSDHRPPLRMIAAGKVYRSDSDQTHSPMFHQIEGLLLDKHATFVDLKGTLSEFLRAFFERDFEVRFRPSYFPFVEPGAEVDIAWQQSDSSVRWLEVLGCGMVHPNVLKNVGIDSECYTGFAFGLGVERFAMLRYGVDDLRAFFENDVRFLRQFS</sequence>
<feature type="chain" id="PRO_1000114930" description="Phenylalanine--tRNA ligase alpha subunit">
    <location>
        <begin position="1"/>
        <end position="333"/>
    </location>
</feature>
<feature type="binding site" evidence="1">
    <location>
        <position position="254"/>
    </location>
    <ligand>
        <name>Mg(2+)</name>
        <dbReference type="ChEBI" id="CHEBI:18420"/>
        <note>shared with beta subunit</note>
    </ligand>
</feature>
<gene>
    <name evidence="1" type="primary">pheS</name>
    <name type="ordered locus">XfasM23_2016</name>
</gene>
<reference key="1">
    <citation type="journal article" date="2010" name="J. Bacteriol.">
        <title>Whole genome sequences of two Xylella fastidiosa strains (M12 and M23) causing almond leaf scorch disease in California.</title>
        <authorList>
            <person name="Chen J."/>
            <person name="Xie G."/>
            <person name="Han S."/>
            <person name="Chertkov O."/>
            <person name="Sims D."/>
            <person name="Civerolo E.L."/>
        </authorList>
    </citation>
    <scope>NUCLEOTIDE SEQUENCE [LARGE SCALE GENOMIC DNA]</scope>
    <source>
        <strain>M23</strain>
    </source>
</reference>
<accession>B2I9P4</accession>
<name>SYFA_XYLF2</name>
<proteinExistence type="inferred from homology"/>
<comment type="catalytic activity">
    <reaction evidence="1">
        <text>tRNA(Phe) + L-phenylalanine + ATP = L-phenylalanyl-tRNA(Phe) + AMP + diphosphate + H(+)</text>
        <dbReference type="Rhea" id="RHEA:19413"/>
        <dbReference type="Rhea" id="RHEA-COMP:9668"/>
        <dbReference type="Rhea" id="RHEA-COMP:9699"/>
        <dbReference type="ChEBI" id="CHEBI:15378"/>
        <dbReference type="ChEBI" id="CHEBI:30616"/>
        <dbReference type="ChEBI" id="CHEBI:33019"/>
        <dbReference type="ChEBI" id="CHEBI:58095"/>
        <dbReference type="ChEBI" id="CHEBI:78442"/>
        <dbReference type="ChEBI" id="CHEBI:78531"/>
        <dbReference type="ChEBI" id="CHEBI:456215"/>
        <dbReference type="EC" id="6.1.1.20"/>
    </reaction>
</comment>
<comment type="cofactor">
    <cofactor evidence="1">
        <name>Mg(2+)</name>
        <dbReference type="ChEBI" id="CHEBI:18420"/>
    </cofactor>
    <text evidence="1">Binds 2 magnesium ions per tetramer.</text>
</comment>
<comment type="subunit">
    <text evidence="1">Tetramer of two alpha and two beta subunits.</text>
</comment>
<comment type="subcellular location">
    <subcellularLocation>
        <location evidence="1">Cytoplasm</location>
    </subcellularLocation>
</comment>
<comment type="similarity">
    <text evidence="1">Belongs to the class-II aminoacyl-tRNA synthetase family. Phe-tRNA synthetase alpha subunit type 1 subfamily.</text>
</comment>
<keyword id="KW-0030">Aminoacyl-tRNA synthetase</keyword>
<keyword id="KW-0067">ATP-binding</keyword>
<keyword id="KW-0963">Cytoplasm</keyword>
<keyword id="KW-0436">Ligase</keyword>
<keyword id="KW-0460">Magnesium</keyword>
<keyword id="KW-0479">Metal-binding</keyword>
<keyword id="KW-0547">Nucleotide-binding</keyword>
<keyword id="KW-0648">Protein biosynthesis</keyword>
<organism>
    <name type="scientific">Xylella fastidiosa (strain M23)</name>
    <dbReference type="NCBI Taxonomy" id="405441"/>
    <lineage>
        <taxon>Bacteria</taxon>
        <taxon>Pseudomonadati</taxon>
        <taxon>Pseudomonadota</taxon>
        <taxon>Gammaproteobacteria</taxon>
        <taxon>Lysobacterales</taxon>
        <taxon>Lysobacteraceae</taxon>
        <taxon>Xylella</taxon>
    </lineage>
</organism>
<protein>
    <recommendedName>
        <fullName evidence="1">Phenylalanine--tRNA ligase alpha subunit</fullName>
        <ecNumber evidence="1">6.1.1.20</ecNumber>
    </recommendedName>
    <alternativeName>
        <fullName evidence="1">Phenylalanyl-tRNA synthetase alpha subunit</fullName>
        <shortName evidence="1">PheRS</shortName>
    </alternativeName>
</protein>
<dbReference type="EC" id="6.1.1.20" evidence="1"/>
<dbReference type="EMBL" id="CP001011">
    <property type="protein sequence ID" value="ACB93415.1"/>
    <property type="molecule type" value="Genomic_DNA"/>
</dbReference>
<dbReference type="SMR" id="B2I9P4"/>
<dbReference type="KEGG" id="xfn:XfasM23_2016"/>
<dbReference type="HOGENOM" id="CLU_025086_0_1_6"/>
<dbReference type="Proteomes" id="UP000001698">
    <property type="component" value="Chromosome"/>
</dbReference>
<dbReference type="GO" id="GO:0005737">
    <property type="term" value="C:cytoplasm"/>
    <property type="evidence" value="ECO:0007669"/>
    <property type="project" value="UniProtKB-SubCell"/>
</dbReference>
<dbReference type="GO" id="GO:0005524">
    <property type="term" value="F:ATP binding"/>
    <property type="evidence" value="ECO:0007669"/>
    <property type="project" value="UniProtKB-UniRule"/>
</dbReference>
<dbReference type="GO" id="GO:0000287">
    <property type="term" value="F:magnesium ion binding"/>
    <property type="evidence" value="ECO:0007669"/>
    <property type="project" value="UniProtKB-UniRule"/>
</dbReference>
<dbReference type="GO" id="GO:0004826">
    <property type="term" value="F:phenylalanine-tRNA ligase activity"/>
    <property type="evidence" value="ECO:0007669"/>
    <property type="project" value="UniProtKB-UniRule"/>
</dbReference>
<dbReference type="GO" id="GO:0000049">
    <property type="term" value="F:tRNA binding"/>
    <property type="evidence" value="ECO:0007669"/>
    <property type="project" value="InterPro"/>
</dbReference>
<dbReference type="GO" id="GO:0006432">
    <property type="term" value="P:phenylalanyl-tRNA aminoacylation"/>
    <property type="evidence" value="ECO:0007669"/>
    <property type="project" value="UniProtKB-UniRule"/>
</dbReference>
<dbReference type="CDD" id="cd00496">
    <property type="entry name" value="PheRS_alpha_core"/>
    <property type="match status" value="1"/>
</dbReference>
<dbReference type="FunFam" id="3.30.930.10:FF:000003">
    <property type="entry name" value="Phenylalanine--tRNA ligase alpha subunit"/>
    <property type="match status" value="1"/>
</dbReference>
<dbReference type="Gene3D" id="3.30.930.10">
    <property type="entry name" value="Bira Bifunctional Protein, Domain 2"/>
    <property type="match status" value="1"/>
</dbReference>
<dbReference type="HAMAP" id="MF_00281">
    <property type="entry name" value="Phe_tRNA_synth_alpha1"/>
    <property type="match status" value="1"/>
</dbReference>
<dbReference type="InterPro" id="IPR006195">
    <property type="entry name" value="aa-tRNA-synth_II"/>
</dbReference>
<dbReference type="InterPro" id="IPR045864">
    <property type="entry name" value="aa-tRNA-synth_II/BPL/LPL"/>
</dbReference>
<dbReference type="InterPro" id="IPR004529">
    <property type="entry name" value="Phe-tRNA-synth_IIc_asu"/>
</dbReference>
<dbReference type="InterPro" id="IPR004188">
    <property type="entry name" value="Phe-tRNA_ligase_II_N"/>
</dbReference>
<dbReference type="InterPro" id="IPR022911">
    <property type="entry name" value="Phe_tRNA_ligase_alpha1_bac"/>
</dbReference>
<dbReference type="InterPro" id="IPR002319">
    <property type="entry name" value="Phenylalanyl-tRNA_Synthase"/>
</dbReference>
<dbReference type="InterPro" id="IPR010978">
    <property type="entry name" value="tRNA-bd_arm"/>
</dbReference>
<dbReference type="NCBIfam" id="TIGR00468">
    <property type="entry name" value="pheS"/>
    <property type="match status" value="1"/>
</dbReference>
<dbReference type="PANTHER" id="PTHR11538:SF41">
    <property type="entry name" value="PHENYLALANINE--TRNA LIGASE, MITOCHONDRIAL"/>
    <property type="match status" value="1"/>
</dbReference>
<dbReference type="PANTHER" id="PTHR11538">
    <property type="entry name" value="PHENYLALANYL-TRNA SYNTHETASE"/>
    <property type="match status" value="1"/>
</dbReference>
<dbReference type="Pfam" id="PF02912">
    <property type="entry name" value="Phe_tRNA-synt_N"/>
    <property type="match status" value="1"/>
</dbReference>
<dbReference type="Pfam" id="PF01409">
    <property type="entry name" value="tRNA-synt_2d"/>
    <property type="match status" value="1"/>
</dbReference>
<dbReference type="SUPFAM" id="SSF55681">
    <property type="entry name" value="Class II aaRS and biotin synthetases"/>
    <property type="match status" value="1"/>
</dbReference>
<dbReference type="SUPFAM" id="SSF46589">
    <property type="entry name" value="tRNA-binding arm"/>
    <property type="match status" value="1"/>
</dbReference>
<dbReference type="PROSITE" id="PS50862">
    <property type="entry name" value="AA_TRNA_LIGASE_II"/>
    <property type="match status" value="1"/>
</dbReference>
<evidence type="ECO:0000255" key="1">
    <source>
        <dbReference type="HAMAP-Rule" id="MF_00281"/>
    </source>
</evidence>